<sequence length="89" mass="10219">MTEAKKSLKRTLVGKVVSDKREKTVTVLVERRVKHPIYDKIVIKSSKYHAHDENSEYKLGDTIEITESRPLSKTKNWVATRLVQKAALV</sequence>
<dbReference type="EMBL" id="CP000512">
    <property type="protein sequence ID" value="ABM30954.1"/>
    <property type="molecule type" value="Genomic_DNA"/>
</dbReference>
<dbReference type="RefSeq" id="WP_011793531.1">
    <property type="nucleotide sequence ID" value="NC_008752.1"/>
</dbReference>
<dbReference type="SMR" id="A1TJ16"/>
<dbReference type="STRING" id="397945.Aave_0347"/>
<dbReference type="GeneID" id="79790152"/>
<dbReference type="KEGG" id="aav:Aave_0347"/>
<dbReference type="eggNOG" id="COG0186">
    <property type="taxonomic scope" value="Bacteria"/>
</dbReference>
<dbReference type="HOGENOM" id="CLU_073626_1_1_4"/>
<dbReference type="OrthoDB" id="9811714at2"/>
<dbReference type="Proteomes" id="UP000002596">
    <property type="component" value="Chromosome"/>
</dbReference>
<dbReference type="GO" id="GO:0022627">
    <property type="term" value="C:cytosolic small ribosomal subunit"/>
    <property type="evidence" value="ECO:0007669"/>
    <property type="project" value="TreeGrafter"/>
</dbReference>
<dbReference type="GO" id="GO:0019843">
    <property type="term" value="F:rRNA binding"/>
    <property type="evidence" value="ECO:0007669"/>
    <property type="project" value="UniProtKB-UniRule"/>
</dbReference>
<dbReference type="GO" id="GO:0003735">
    <property type="term" value="F:structural constituent of ribosome"/>
    <property type="evidence" value="ECO:0007669"/>
    <property type="project" value="InterPro"/>
</dbReference>
<dbReference type="GO" id="GO:0006412">
    <property type="term" value="P:translation"/>
    <property type="evidence" value="ECO:0007669"/>
    <property type="project" value="UniProtKB-UniRule"/>
</dbReference>
<dbReference type="CDD" id="cd00364">
    <property type="entry name" value="Ribosomal_uS17"/>
    <property type="match status" value="1"/>
</dbReference>
<dbReference type="Gene3D" id="2.40.50.140">
    <property type="entry name" value="Nucleic acid-binding proteins"/>
    <property type="match status" value="1"/>
</dbReference>
<dbReference type="HAMAP" id="MF_01345_B">
    <property type="entry name" value="Ribosomal_uS17_B"/>
    <property type="match status" value="1"/>
</dbReference>
<dbReference type="InterPro" id="IPR012340">
    <property type="entry name" value="NA-bd_OB-fold"/>
</dbReference>
<dbReference type="InterPro" id="IPR000266">
    <property type="entry name" value="Ribosomal_uS17"/>
</dbReference>
<dbReference type="InterPro" id="IPR019984">
    <property type="entry name" value="Ribosomal_uS17_bact/chlr"/>
</dbReference>
<dbReference type="InterPro" id="IPR019979">
    <property type="entry name" value="Ribosomal_uS17_CS"/>
</dbReference>
<dbReference type="NCBIfam" id="NF004123">
    <property type="entry name" value="PRK05610.1"/>
    <property type="match status" value="1"/>
</dbReference>
<dbReference type="NCBIfam" id="TIGR03635">
    <property type="entry name" value="uS17_bact"/>
    <property type="match status" value="1"/>
</dbReference>
<dbReference type="PANTHER" id="PTHR10744">
    <property type="entry name" value="40S RIBOSOMAL PROTEIN S11 FAMILY MEMBER"/>
    <property type="match status" value="1"/>
</dbReference>
<dbReference type="PANTHER" id="PTHR10744:SF1">
    <property type="entry name" value="SMALL RIBOSOMAL SUBUNIT PROTEIN US17M"/>
    <property type="match status" value="1"/>
</dbReference>
<dbReference type="Pfam" id="PF00366">
    <property type="entry name" value="Ribosomal_S17"/>
    <property type="match status" value="1"/>
</dbReference>
<dbReference type="PRINTS" id="PR00973">
    <property type="entry name" value="RIBOSOMALS17"/>
</dbReference>
<dbReference type="SUPFAM" id="SSF50249">
    <property type="entry name" value="Nucleic acid-binding proteins"/>
    <property type="match status" value="1"/>
</dbReference>
<dbReference type="PROSITE" id="PS00056">
    <property type="entry name" value="RIBOSOMAL_S17"/>
    <property type="match status" value="1"/>
</dbReference>
<protein>
    <recommendedName>
        <fullName evidence="1">Small ribosomal subunit protein uS17</fullName>
    </recommendedName>
    <alternativeName>
        <fullName evidence="2">30S ribosomal protein S17</fullName>
    </alternativeName>
</protein>
<evidence type="ECO:0000255" key="1">
    <source>
        <dbReference type="HAMAP-Rule" id="MF_01345"/>
    </source>
</evidence>
<evidence type="ECO:0000305" key="2"/>
<accession>A1TJ16</accession>
<comment type="function">
    <text evidence="1">One of the primary rRNA binding proteins, it binds specifically to the 5'-end of 16S ribosomal RNA.</text>
</comment>
<comment type="subunit">
    <text evidence="1">Part of the 30S ribosomal subunit.</text>
</comment>
<comment type="similarity">
    <text evidence="1">Belongs to the universal ribosomal protein uS17 family.</text>
</comment>
<feature type="chain" id="PRO_1000054905" description="Small ribosomal subunit protein uS17">
    <location>
        <begin position="1"/>
        <end position="89"/>
    </location>
</feature>
<keyword id="KW-0687">Ribonucleoprotein</keyword>
<keyword id="KW-0689">Ribosomal protein</keyword>
<keyword id="KW-0694">RNA-binding</keyword>
<keyword id="KW-0699">rRNA-binding</keyword>
<proteinExistence type="inferred from homology"/>
<organism>
    <name type="scientific">Paracidovorax citrulli (strain AAC00-1)</name>
    <name type="common">Acidovorax citrulli</name>
    <dbReference type="NCBI Taxonomy" id="397945"/>
    <lineage>
        <taxon>Bacteria</taxon>
        <taxon>Pseudomonadati</taxon>
        <taxon>Pseudomonadota</taxon>
        <taxon>Betaproteobacteria</taxon>
        <taxon>Burkholderiales</taxon>
        <taxon>Comamonadaceae</taxon>
        <taxon>Paracidovorax</taxon>
    </lineage>
</organism>
<gene>
    <name evidence="1" type="primary">rpsQ</name>
    <name type="ordered locus">Aave_0347</name>
</gene>
<name>RS17_PARC0</name>
<reference key="1">
    <citation type="submission" date="2006-12" db="EMBL/GenBank/DDBJ databases">
        <title>Complete sequence of Acidovorax avenae subsp. citrulli AAC00-1.</title>
        <authorList>
            <person name="Copeland A."/>
            <person name="Lucas S."/>
            <person name="Lapidus A."/>
            <person name="Barry K."/>
            <person name="Detter J.C."/>
            <person name="Glavina del Rio T."/>
            <person name="Dalin E."/>
            <person name="Tice H."/>
            <person name="Pitluck S."/>
            <person name="Kiss H."/>
            <person name="Brettin T."/>
            <person name="Bruce D."/>
            <person name="Han C."/>
            <person name="Tapia R."/>
            <person name="Gilna P."/>
            <person name="Schmutz J."/>
            <person name="Larimer F."/>
            <person name="Land M."/>
            <person name="Hauser L."/>
            <person name="Kyrpides N."/>
            <person name="Kim E."/>
            <person name="Stahl D."/>
            <person name="Richardson P."/>
        </authorList>
    </citation>
    <scope>NUCLEOTIDE SEQUENCE [LARGE SCALE GENOMIC DNA]</scope>
    <source>
        <strain>AAC00-1</strain>
    </source>
</reference>